<proteinExistence type="evidence at protein level"/>
<sequence length="335" mass="36329">MKISRSLSTVEVHTGGEAFRIVTSGLPRLPGDTIVQRRAWLKAHADEIRRALMFEPRGHADMYGGYLTEPVSPNADFGVIFVHNEGYSDHCGHGVIALSTAAVELGWVQRTVPETRVGIDAPCGFIEAFVQWDGEHAGPVRFVNVPSFIWRRDVSVDTPSFGTVTGDIAYGGAFYFYVDGAPFDLPVRESAVEKLIRFGAEVKAAANATYPVVHPEIPEINHIYGTIIANAPRHAGSTQANCCVFADREVDRSPTGSGTGGRVAQLYQRGLLAAGDTLVNESIVGTVFKGRVLRETTVGDFPAVIPEVEGSAHICGFANWIVDERDPLTYGFLVR</sequence>
<organism>
    <name type="scientific">Burkholderia cenocepacia (strain HI2424)</name>
    <dbReference type="NCBI Taxonomy" id="331272"/>
    <lineage>
        <taxon>Bacteria</taxon>
        <taxon>Pseudomonadati</taxon>
        <taxon>Pseudomonadota</taxon>
        <taxon>Betaproteobacteria</taxon>
        <taxon>Burkholderiales</taxon>
        <taxon>Burkholderiaceae</taxon>
        <taxon>Burkholderia</taxon>
        <taxon>Burkholderia cepacia complex</taxon>
    </lineage>
</organism>
<reference key="1">
    <citation type="submission" date="2006-08" db="EMBL/GenBank/DDBJ databases">
        <title>Complete sequence of chromosome 2 of Burkholderia cenocepacia HI2424.</title>
        <authorList>
            <person name="Copeland A."/>
            <person name="Lucas S."/>
            <person name="Lapidus A."/>
            <person name="Barry K."/>
            <person name="Detter J.C."/>
            <person name="Glavina del Rio T."/>
            <person name="Hammon N."/>
            <person name="Israni S."/>
            <person name="Pitluck S."/>
            <person name="Chain P."/>
            <person name="Malfatti S."/>
            <person name="Shin M."/>
            <person name="Vergez L."/>
            <person name="Schmutz J."/>
            <person name="Larimer F."/>
            <person name="Land M."/>
            <person name="Hauser L."/>
            <person name="Kyrpides N."/>
            <person name="Kim E."/>
            <person name="LiPuma J.J."/>
            <person name="Gonzalez C.F."/>
            <person name="Konstantinidis K."/>
            <person name="Tiedje J.M."/>
            <person name="Richardson P."/>
        </authorList>
    </citation>
    <scope>NUCLEOTIDE SEQUENCE [LARGE SCALE GENOMIC DNA]</scope>
    <source>
        <strain>HI2424</strain>
    </source>
</reference>
<reference key="2">
    <citation type="journal article" date="2007" name="PLoS ONE">
        <title>Molecular and structural discrimination of proline racemase and hydroxyproline-2-epimerase from nosocomial and bacterial pathogens.</title>
        <authorList>
            <person name="Goytia M."/>
            <person name="Chamond N."/>
            <person name="Cosson A."/>
            <person name="Coatnoan N."/>
            <person name="Hermant D."/>
            <person name="Berneman A."/>
            <person name="Minoprio P."/>
        </authorList>
    </citation>
    <scope>LACK OF ENZYMATIC ACTIVITY AS PROLINE RACEMASE AND HYDROXYPROLINE-2-EPIMERASE</scope>
</reference>
<dbReference type="EC" id="4.2.1.77" evidence="2"/>
<dbReference type="EMBL" id="CP000459">
    <property type="protein sequence ID" value="ABK11094.1"/>
    <property type="molecule type" value="Genomic_DNA"/>
</dbReference>
<dbReference type="RefSeq" id="WP_011547736.1">
    <property type="nucleotide sequence ID" value="NC_008543.1"/>
</dbReference>
<dbReference type="SMR" id="A0B0B8"/>
<dbReference type="KEGG" id="bch:Bcen2424_4360"/>
<dbReference type="HOGENOM" id="CLU_036729_0_0_4"/>
<dbReference type="GO" id="GO:0050346">
    <property type="term" value="F:trans-L-3-hydroxyproline dehydratase activity"/>
    <property type="evidence" value="ECO:0007669"/>
    <property type="project" value="UniProtKB-EC"/>
</dbReference>
<dbReference type="FunFam" id="3.10.310.10:FF:000029">
    <property type="entry name" value="Trans-3-hydroxy-L-proline dehydratase"/>
    <property type="match status" value="1"/>
</dbReference>
<dbReference type="Gene3D" id="3.10.310.10">
    <property type="entry name" value="Diaminopimelate Epimerase, Chain A, domain 1"/>
    <property type="match status" value="2"/>
</dbReference>
<dbReference type="InterPro" id="IPR053425">
    <property type="entry name" value="Hydroxyproline_Metab_Enz"/>
</dbReference>
<dbReference type="InterPro" id="IPR008794">
    <property type="entry name" value="Pro_racemase_fam"/>
</dbReference>
<dbReference type="NCBIfam" id="NF045511">
    <property type="entry name" value="TransHydProDhtase"/>
    <property type="match status" value="1"/>
</dbReference>
<dbReference type="PANTHER" id="PTHR33442">
    <property type="entry name" value="TRANS-3-HYDROXY-L-PROLINE DEHYDRATASE"/>
    <property type="match status" value="1"/>
</dbReference>
<dbReference type="PANTHER" id="PTHR33442:SF1">
    <property type="entry name" value="TRANS-3-HYDROXY-L-PROLINE DEHYDRATASE"/>
    <property type="match status" value="1"/>
</dbReference>
<dbReference type="Pfam" id="PF05544">
    <property type="entry name" value="Pro_racemase"/>
    <property type="match status" value="1"/>
</dbReference>
<dbReference type="PIRSF" id="PIRSF029792">
    <property type="entry name" value="Pro_racemase"/>
    <property type="match status" value="1"/>
</dbReference>
<dbReference type="SFLD" id="SFLDS00028">
    <property type="entry name" value="Proline_Racemase"/>
    <property type="match status" value="1"/>
</dbReference>
<dbReference type="SUPFAM" id="SSF54506">
    <property type="entry name" value="Diaminopimelate epimerase-like"/>
    <property type="match status" value="1"/>
</dbReference>
<feature type="chain" id="PRO_0000354046" description="Trans-3-hydroxy-L-proline dehydratase">
    <location>
        <begin position="1"/>
        <end position="335"/>
    </location>
</feature>
<feature type="active site" description="Proton acceptor" evidence="1">
    <location>
        <position position="91"/>
    </location>
</feature>
<feature type="binding site" evidence="1">
    <location>
        <begin position="92"/>
        <end position="93"/>
    </location>
    <ligand>
        <name>substrate</name>
    </ligand>
</feature>
<feature type="binding site" evidence="1">
    <location>
        <position position="222"/>
    </location>
    <ligand>
        <name>substrate</name>
    </ligand>
</feature>
<feature type="binding site" evidence="1">
    <location>
        <begin position="256"/>
        <end position="257"/>
    </location>
    <ligand>
        <name>substrate</name>
    </ligand>
</feature>
<gene>
    <name evidence="2" type="primary">lhpH</name>
    <name type="ordered locus">Bcen2424_4360</name>
</gene>
<protein>
    <recommendedName>
        <fullName evidence="2">Trans-3-hydroxy-L-proline dehydratase</fullName>
        <shortName evidence="2">T3LHyp dehydratase</shortName>
        <shortName>t3HypD</shortName>
        <ecNumber evidence="2">4.2.1.77</ecNumber>
    </recommendedName>
    <alternativeName>
        <fullName>Trans-L-3-hydroxyproline dehydratase</fullName>
    </alternativeName>
</protein>
<name>T3HPD_BURCH</name>
<keyword id="KW-0456">Lyase</keyword>
<comment type="function">
    <text evidence="2 3">Catalyzes the dehydration of trans-3-hydroxy-L-proline (t3LHyp) to Delta(1)-pyrroline-2-carboxylate (Pyr2C) (By similarity). Does not possess neither proline racemase nor 4-hydroxyproline 2-epimerase activities (PubMed:17849014).</text>
</comment>
<comment type="catalytic activity">
    <reaction evidence="2">
        <text>trans-3-hydroxy-L-proline = 1-pyrroline-2-carboxylate + H2O</text>
        <dbReference type="Rhea" id="RHEA:10320"/>
        <dbReference type="ChEBI" id="CHEBI:15377"/>
        <dbReference type="ChEBI" id="CHEBI:39785"/>
        <dbReference type="ChEBI" id="CHEBI:57938"/>
        <dbReference type="EC" id="4.2.1.77"/>
    </reaction>
</comment>
<comment type="subunit">
    <text evidence="2">Homodimer.</text>
</comment>
<comment type="similarity">
    <text evidence="4">Belongs to the proline racemase family.</text>
</comment>
<evidence type="ECO:0000250" key="1">
    <source>
        <dbReference type="UniProtKB" id="Q4KGU2"/>
    </source>
</evidence>
<evidence type="ECO:0000250" key="2">
    <source>
        <dbReference type="UniProtKB" id="V5YXI5"/>
    </source>
</evidence>
<evidence type="ECO:0000269" key="3">
    <source>
    </source>
</evidence>
<evidence type="ECO:0000305" key="4"/>
<accession>A0B0B8</accession>